<feature type="chain" id="PRO_0000280298" description="Protein O-mannosyl-transferase Tmtc1">
    <location>
        <begin position="1"/>
        <end position="859"/>
    </location>
</feature>
<feature type="topological domain" description="Cytoplasmic" evidence="5">
    <location>
        <begin position="1"/>
        <end position="22"/>
    </location>
</feature>
<feature type="transmembrane region" description="Helical" evidence="2">
    <location>
        <begin position="23"/>
        <end position="43"/>
    </location>
</feature>
<feature type="topological domain" description="Extracellular" evidence="5">
    <location>
        <begin position="44"/>
        <end position="103"/>
    </location>
</feature>
<feature type="transmembrane region" description="Helical" evidence="2">
    <location>
        <begin position="104"/>
        <end position="124"/>
    </location>
</feature>
<feature type="topological domain" description="Cytoplasmic" evidence="5">
    <location>
        <begin position="125"/>
        <end position="134"/>
    </location>
</feature>
<feature type="transmembrane region" description="Helical" evidence="2">
    <location>
        <begin position="135"/>
        <end position="154"/>
    </location>
</feature>
<feature type="transmembrane region" description="Helical" evidence="2">
    <location>
        <begin position="155"/>
        <end position="174"/>
    </location>
</feature>
<feature type="topological domain" description="Cytoplasmic" evidence="5">
    <location>
        <begin position="175"/>
        <end position="189"/>
    </location>
</feature>
<feature type="transmembrane region" description="Helical" evidence="2">
    <location>
        <begin position="190"/>
        <end position="210"/>
    </location>
</feature>
<feature type="topological domain" description="Extracellular" evidence="5">
    <location>
        <begin position="211"/>
        <end position="245"/>
    </location>
</feature>
<feature type="transmembrane region" description="Helical" evidence="2">
    <location>
        <begin position="246"/>
        <end position="266"/>
    </location>
</feature>
<feature type="topological domain" description="Cytoplasmic" evidence="5">
    <location>
        <begin position="267"/>
        <end position="288"/>
    </location>
</feature>
<feature type="transmembrane region" description="Helical" evidence="2">
    <location>
        <begin position="289"/>
        <end position="309"/>
    </location>
</feature>
<feature type="topological domain" description="Extracellular" evidence="5">
    <location>
        <begin position="310"/>
        <end position="328"/>
    </location>
</feature>
<feature type="transmembrane region" description="Helical" evidence="2">
    <location>
        <begin position="329"/>
        <end position="349"/>
    </location>
</feature>
<feature type="topological domain" description="Cytoplasmic" evidence="5">
    <location>
        <begin position="350"/>
        <end position="422"/>
    </location>
</feature>
<feature type="transmembrane region" description="Helical" evidence="2">
    <location>
        <begin position="423"/>
        <end position="443"/>
    </location>
</feature>
<feature type="topological domain" description="Extracellular" evidence="5">
    <location>
        <begin position="444"/>
        <end position="446"/>
    </location>
</feature>
<feature type="transmembrane region" description="Helical" evidence="2">
    <location>
        <begin position="447"/>
        <end position="467"/>
    </location>
</feature>
<feature type="topological domain" description="Cytoplasmic" evidence="5">
    <location>
        <begin position="468"/>
        <end position="473"/>
    </location>
</feature>
<feature type="transmembrane region" description="Helical" evidence="2">
    <location>
        <begin position="474"/>
        <end position="493"/>
    </location>
</feature>
<feature type="topological domain" description="Extracellular" evidence="5">
    <location>
        <begin position="494"/>
        <end position="859"/>
    </location>
</feature>
<feature type="repeat" description="TPR 1" evidence="3">
    <location>
        <begin position="518"/>
        <end position="551"/>
    </location>
</feature>
<feature type="repeat" description="TPR 2" evidence="3">
    <location>
        <begin position="552"/>
        <end position="585"/>
    </location>
</feature>
<feature type="repeat" description="TPR 3" evidence="2">
    <location>
        <begin position="586"/>
        <end position="620"/>
    </location>
</feature>
<feature type="repeat" description="TPR 4" evidence="3">
    <location>
        <begin position="632"/>
        <end position="665"/>
    </location>
</feature>
<feature type="repeat" description="TPR 5" evidence="3">
    <location>
        <begin position="671"/>
        <end position="704"/>
    </location>
</feature>
<feature type="repeat" description="TPR 6" evidence="2">
    <location>
        <begin position="705"/>
        <end position="739"/>
    </location>
</feature>
<feature type="repeat" description="TPR 7" evidence="3">
    <location>
        <begin position="740"/>
        <end position="773"/>
    </location>
</feature>
<feature type="repeat" description="TPR 8" evidence="3">
    <location>
        <begin position="774"/>
        <end position="807"/>
    </location>
</feature>
<feature type="repeat" description="TPR 9" evidence="3">
    <location>
        <begin position="808"/>
        <end position="841"/>
    </location>
</feature>
<feature type="glycosylation site" description="N-linked (GlcNAc...) asparagine" evidence="4">
    <location>
        <position position="567"/>
    </location>
</feature>
<feature type="glycosylation site" description="N-linked (GlcNAc...) asparagine" evidence="4">
    <location>
        <position position="718"/>
    </location>
</feature>
<feature type="sequence conflict" description="In Ref. 4; AAL90222." evidence="5" ref="4">
    <original>H</original>
    <variation>Q</variation>
    <location>
        <position position="17"/>
    </location>
</feature>
<feature type="sequence conflict" description="In Ref. 4; AAL90222." evidence="5" ref="4">
    <original>M</original>
    <variation>V</variation>
    <location>
        <position position="191"/>
    </location>
</feature>
<feature type="sequence conflict" description="In Ref. 4; AAL90222." evidence="5" ref="4">
    <original>E</original>
    <variation>K</variation>
    <location>
        <position position="222"/>
    </location>
</feature>
<feature type="sequence conflict" description="In Ref. 4; AAL90222." evidence="5" ref="4">
    <original>V</original>
    <variation>T</variation>
    <location>
        <position position="227"/>
    </location>
</feature>
<feature type="sequence conflict" description="In Ref. 3; ADC53520." evidence="5" ref="3">
    <original>D</original>
    <variation>Y</variation>
    <location>
        <position position="229"/>
    </location>
</feature>
<feature type="sequence conflict" description="In Ref. 4; AAL90222." evidence="5" ref="4">
    <original>G</original>
    <variation>A</variation>
    <location>
        <position position="257"/>
    </location>
</feature>
<feature type="sequence conflict" description="In Ref. 4; AAL90222." evidence="5" ref="4">
    <original>S</original>
    <variation>P</variation>
    <location>
        <position position="319"/>
    </location>
</feature>
<feature type="sequence conflict" description="In Ref. 4; AAL90222." evidence="5" ref="4">
    <original>T</original>
    <variation>A</variation>
    <location>
        <position position="544"/>
    </location>
</feature>
<feature type="sequence conflict" description="In Ref. 4; AAL90222." evidence="5" ref="4">
    <original>S</original>
    <variation>T</variation>
    <location>
        <position position="570"/>
    </location>
</feature>
<feature type="sequence conflict" description="In Ref. 4; AAL90222." evidence="5" ref="4">
    <original>G</original>
    <variation>S</variation>
    <location>
        <position position="761"/>
    </location>
</feature>
<feature type="sequence conflict" description="In Ref. 3; ADC53520." evidence="5" ref="3">
    <original>L</original>
    <variation>F</variation>
    <location>
        <position position="762"/>
    </location>
</feature>
<accession>Q9VQE9</accession>
<accession>D3PFE4</accession>
<accession>Q7KU17</accession>
<accession>Q8T3V2</accession>
<name>TMTC1_DROME</name>
<dbReference type="EC" id="2.4.1.109" evidence="1"/>
<dbReference type="EMBL" id="AE014134">
    <property type="protein sequence ID" value="AAS64621.2"/>
    <property type="molecule type" value="Genomic_DNA"/>
</dbReference>
<dbReference type="EMBL" id="BT120303">
    <property type="protein sequence ID" value="ADC53520.1"/>
    <property type="molecule type" value="mRNA"/>
</dbReference>
<dbReference type="EMBL" id="AY089484">
    <property type="protein sequence ID" value="AAL90222.1"/>
    <property type="status" value="ALT_SEQ"/>
    <property type="molecule type" value="mRNA"/>
</dbReference>
<dbReference type="RefSeq" id="NP_995615.2">
    <property type="nucleotide sequence ID" value="NM_205893.3"/>
</dbReference>
<dbReference type="SMR" id="Q9VQE9"/>
<dbReference type="FunCoup" id="Q9VQE9">
    <property type="interactions" value="81"/>
</dbReference>
<dbReference type="STRING" id="7227.FBpp0290896"/>
<dbReference type="GlyGen" id="Q9VQE9">
    <property type="glycosylation" value="2 sites"/>
</dbReference>
<dbReference type="PaxDb" id="7227-FBpp0290896"/>
<dbReference type="EnsemblMetazoa" id="FBtr0301682">
    <property type="protein sequence ID" value="FBpp0290896"/>
    <property type="gene ID" value="FBgn0051690"/>
</dbReference>
<dbReference type="GeneID" id="33455"/>
<dbReference type="KEGG" id="dme:Dmel_CG31690"/>
<dbReference type="UCSC" id="CG31690-RA">
    <property type="organism name" value="d. melanogaster"/>
</dbReference>
<dbReference type="AGR" id="FB:FBgn0051690"/>
<dbReference type="CTD" id="83857"/>
<dbReference type="FlyBase" id="FBgn0051690">
    <property type="gene designation" value="Tmtc1"/>
</dbReference>
<dbReference type="VEuPathDB" id="VectorBase:FBgn0051690"/>
<dbReference type="eggNOG" id="KOG1124">
    <property type="taxonomic scope" value="Eukaryota"/>
</dbReference>
<dbReference type="HOGENOM" id="CLU_011615_4_0_1"/>
<dbReference type="InParanoid" id="Q9VQE9"/>
<dbReference type="OMA" id="PHNYALQ"/>
<dbReference type="OrthoDB" id="1658288at2759"/>
<dbReference type="PhylomeDB" id="Q9VQE9"/>
<dbReference type="UniPathway" id="UPA00378"/>
<dbReference type="BioGRID-ORCS" id="33455">
    <property type="hits" value="0 hits in 1 CRISPR screen"/>
</dbReference>
<dbReference type="GenomeRNAi" id="33455"/>
<dbReference type="PRO" id="PR:Q9VQE9"/>
<dbReference type="Proteomes" id="UP000000803">
    <property type="component" value="Chromosome 2L"/>
</dbReference>
<dbReference type="Bgee" id="FBgn0051690">
    <property type="expression patterns" value="Expressed in antennal lobe projection neuron (Drosophila) in insect head and 118 other cell types or tissues"/>
</dbReference>
<dbReference type="ExpressionAtlas" id="Q9VQE9">
    <property type="expression patterns" value="baseline and differential"/>
</dbReference>
<dbReference type="GO" id="GO:0005789">
    <property type="term" value="C:endoplasmic reticulum membrane"/>
    <property type="evidence" value="ECO:0000250"/>
    <property type="project" value="FlyBase"/>
</dbReference>
<dbReference type="GO" id="GO:0004169">
    <property type="term" value="F:dolichyl-phosphate-mannose-protein mannosyltransferase activity"/>
    <property type="evidence" value="ECO:0000250"/>
    <property type="project" value="UniProtKB"/>
</dbReference>
<dbReference type="GO" id="GO:0000030">
    <property type="term" value="F:mannosyltransferase activity"/>
    <property type="evidence" value="ECO:0000318"/>
    <property type="project" value="GO_Central"/>
</dbReference>
<dbReference type="GO" id="GO:0035269">
    <property type="term" value="P:protein O-linked mannosylation"/>
    <property type="evidence" value="ECO:0000250"/>
    <property type="project" value="UniProtKB"/>
</dbReference>
<dbReference type="Gene3D" id="1.25.40.10">
    <property type="entry name" value="Tetratricopeptide repeat domain"/>
    <property type="match status" value="2"/>
</dbReference>
<dbReference type="InterPro" id="IPR013618">
    <property type="entry name" value="TMTC_DUF1736"/>
</dbReference>
<dbReference type="InterPro" id="IPR052384">
    <property type="entry name" value="TMTC_O-mannosyltransferase"/>
</dbReference>
<dbReference type="InterPro" id="IPR011990">
    <property type="entry name" value="TPR-like_helical_dom_sf"/>
</dbReference>
<dbReference type="InterPro" id="IPR013105">
    <property type="entry name" value="TPR_2"/>
</dbReference>
<dbReference type="InterPro" id="IPR019734">
    <property type="entry name" value="TPR_rpt"/>
</dbReference>
<dbReference type="PANTHER" id="PTHR44216">
    <property type="entry name" value="PROTEIN O-MANNOSYL-TRANSFERASE TMTC2"/>
    <property type="match status" value="1"/>
</dbReference>
<dbReference type="PANTHER" id="PTHR44216:SF3">
    <property type="entry name" value="PROTEIN O-MANNOSYL-TRANSFERASE TMTC2"/>
    <property type="match status" value="1"/>
</dbReference>
<dbReference type="Pfam" id="PF08409">
    <property type="entry name" value="TMTC_DUF1736"/>
    <property type="match status" value="1"/>
</dbReference>
<dbReference type="Pfam" id="PF00515">
    <property type="entry name" value="TPR_1"/>
    <property type="match status" value="1"/>
</dbReference>
<dbReference type="Pfam" id="PF07719">
    <property type="entry name" value="TPR_2"/>
    <property type="match status" value="1"/>
</dbReference>
<dbReference type="Pfam" id="PF13176">
    <property type="entry name" value="TPR_7"/>
    <property type="match status" value="1"/>
</dbReference>
<dbReference type="SMART" id="SM00028">
    <property type="entry name" value="TPR"/>
    <property type="match status" value="7"/>
</dbReference>
<dbReference type="SUPFAM" id="SSF48452">
    <property type="entry name" value="TPR-like"/>
    <property type="match status" value="1"/>
</dbReference>
<dbReference type="PROSITE" id="PS50005">
    <property type="entry name" value="TPR"/>
    <property type="match status" value="7"/>
</dbReference>
<dbReference type="PROSITE" id="PS50293">
    <property type="entry name" value="TPR_REGION"/>
    <property type="match status" value="2"/>
</dbReference>
<keyword id="KW-0256">Endoplasmic reticulum</keyword>
<keyword id="KW-0325">Glycoprotein</keyword>
<keyword id="KW-0472">Membrane</keyword>
<keyword id="KW-1185">Reference proteome</keyword>
<keyword id="KW-0677">Repeat</keyword>
<keyword id="KW-0802">TPR repeat</keyword>
<keyword id="KW-0808">Transferase</keyword>
<keyword id="KW-0812">Transmembrane</keyword>
<keyword id="KW-1133">Transmembrane helix</keyword>
<proteinExistence type="evidence at transcript level"/>
<protein>
    <recommendedName>
        <fullName evidence="5">Protein O-mannosyl-transferase Tmtc1</fullName>
        <ecNumber evidence="1">2.4.1.109</ecNumber>
    </recommendedName>
    <alternativeName>
        <fullName evidence="6">Transmembrane O-mannosyltransferase targeting cadherins 1</fullName>
    </alternativeName>
    <alternativeName>
        <fullName evidence="1">Transmembrane and tetratricopeptide repeat-containing 1</fullName>
    </alternativeName>
</protein>
<comment type="function">
    <text evidence="1">Transfers mannosyl residues to the hydroxyl group of serine or threonine residues.</text>
</comment>
<comment type="catalytic activity">
    <reaction evidence="1">
        <text>a di-trans,poly-cis-dolichyl beta-D-mannosyl phosphate + L-seryl-[protein] = 3-O-(alpha-D-mannosyl)-L-seryl-[protein] + a di-trans,poly-cis-dolichyl phosphate + H(+)</text>
        <dbReference type="Rhea" id="RHEA:17377"/>
        <dbReference type="Rhea" id="RHEA-COMP:9863"/>
        <dbReference type="Rhea" id="RHEA-COMP:13546"/>
        <dbReference type="Rhea" id="RHEA-COMP:19498"/>
        <dbReference type="Rhea" id="RHEA-COMP:19501"/>
        <dbReference type="ChEBI" id="CHEBI:15378"/>
        <dbReference type="ChEBI" id="CHEBI:29999"/>
        <dbReference type="ChEBI" id="CHEBI:57683"/>
        <dbReference type="ChEBI" id="CHEBI:58211"/>
        <dbReference type="ChEBI" id="CHEBI:137321"/>
        <dbReference type="EC" id="2.4.1.109"/>
    </reaction>
</comment>
<comment type="catalytic activity">
    <reaction evidence="1">
        <text>a di-trans,poly-cis-dolichyl beta-D-mannosyl phosphate + L-threonyl-[protein] = 3-O-(alpha-D-mannosyl)-L-threonyl-[protein] + a di-trans,poly-cis-dolichyl phosphate + H(+)</text>
        <dbReference type="Rhea" id="RHEA:53396"/>
        <dbReference type="Rhea" id="RHEA-COMP:11060"/>
        <dbReference type="Rhea" id="RHEA-COMP:13547"/>
        <dbReference type="Rhea" id="RHEA-COMP:19498"/>
        <dbReference type="Rhea" id="RHEA-COMP:19501"/>
        <dbReference type="ChEBI" id="CHEBI:15378"/>
        <dbReference type="ChEBI" id="CHEBI:30013"/>
        <dbReference type="ChEBI" id="CHEBI:57683"/>
        <dbReference type="ChEBI" id="CHEBI:58211"/>
        <dbReference type="ChEBI" id="CHEBI:137323"/>
        <dbReference type="EC" id="2.4.1.109"/>
    </reaction>
</comment>
<comment type="pathway">
    <text evidence="1">Protein modification; protein glycosylation.</text>
</comment>
<comment type="subcellular location">
    <subcellularLocation>
        <location evidence="2">Membrane</location>
        <topology evidence="2">Multi-pass membrane protein</topology>
    </subcellularLocation>
    <subcellularLocation>
        <location evidence="1">Endoplasmic reticulum</location>
    </subcellularLocation>
</comment>
<comment type="similarity">
    <text evidence="5">Belongs to the TMTC family.</text>
</comment>
<comment type="sequence caution" evidence="5">
    <conflict type="miscellaneous discrepancy">
        <sequence resource="EMBL-CDS" id="AAL90222"/>
    </conflict>
    <text>Probable cloning artifact giving rise to incorrect N-terminus.</text>
</comment>
<gene>
    <name evidence="6" type="primary">Tmtc1</name>
    <name evidence="6" type="ORF">CG31690</name>
</gene>
<evidence type="ECO:0000250" key="1">
    <source>
        <dbReference type="UniProtKB" id="Q8IUR5"/>
    </source>
</evidence>
<evidence type="ECO:0000255" key="2"/>
<evidence type="ECO:0000255" key="3">
    <source>
        <dbReference type="PROSITE-ProRule" id="PRU00339"/>
    </source>
</evidence>
<evidence type="ECO:0000255" key="4">
    <source>
        <dbReference type="PROSITE-ProRule" id="PRU00498"/>
    </source>
</evidence>
<evidence type="ECO:0000305" key="5"/>
<evidence type="ECO:0000312" key="6">
    <source>
        <dbReference type="FlyBase" id="FBgn0051690"/>
    </source>
</evidence>
<evidence type="ECO:0000312" key="7">
    <source>
        <dbReference type="Proteomes" id="UP000000803"/>
    </source>
</evidence>
<sequence length="859" mass="94857">MHTPKCRRPSMSATLSHKDLAGLAGCSALAFVLYLNTLNAGFVYDDRRAILANGDVTGARPLANLLRNDFWGTPLVDSGSHGSWRPLCVLSFRLNYLAGGMTPLGYHLVNVMLHCVATWLVFLVARTLLPSRMGVLAAGALFAVHPAHTEAVAGLVGRADLASCVCYLLAYLSYRRHMLNREWGSLILTIMLALAALLCKETAITALLLCGLCDVLSPVGRENSDKVCDGSISGLASFNFQRRFRSLSILGFTLLCGLYCRLSLLPRPSTAFSAADNPTAHESCFWTRTLTFLYLPVANFGILLWPQELSFDWGMEAVSRIRTLWDARNILTAGFYGSLVAILWKGSGLRSAASPMDFAEVANISLPLLRRLGGNSCHTWLGLTCDCHHQLSAPSYRSASAIYSTSSKSKSASWTAAPILGTAFLVLPFLPASNLLFYVGFVMAERVLYLPSVGYCLLFGLGFGHLWQRVNSSWRSRLMLLCGLALLLGVHGVRTFRRNLDWRDEEQLFRSAISINPPKALGNLGSVLSAQGRYEEAELTLRMTLGHRPTMADAHFNLGVVHQKQLNFSSAIPCFRRAIELRPQLAVAYLNLGTSLISLGDHRQEAISVLRTGARLEGSGVRDRGAHVEARYTCYLQLSVLYRSDGRLQDAAAALRESLKALPLLPQKQRAVLHLRLGEILAELQDWNEAEHQQRLAMQLQPEQGAAYVTYGQTLARNGSRLAEAESWFKRALQLAPLEPSSHHHYADFLEQQERHHEALGLRLRAAALAPQDYTLQSCVADALRLLNRLAEAELWYRKAVTLQPMAAHAHANLGAILQMRGLRKEAVACYHKALELQPGHAISRANLARMNVHKHENE</sequence>
<reference key="1">
    <citation type="journal article" date="2000" name="Science">
        <title>The genome sequence of Drosophila melanogaster.</title>
        <authorList>
            <person name="Adams M.D."/>
            <person name="Celniker S.E."/>
            <person name="Holt R.A."/>
            <person name="Evans C.A."/>
            <person name="Gocayne J.D."/>
            <person name="Amanatides P.G."/>
            <person name="Scherer S.E."/>
            <person name="Li P.W."/>
            <person name="Hoskins R.A."/>
            <person name="Galle R.F."/>
            <person name="George R.A."/>
            <person name="Lewis S.E."/>
            <person name="Richards S."/>
            <person name="Ashburner M."/>
            <person name="Henderson S.N."/>
            <person name="Sutton G.G."/>
            <person name="Wortman J.R."/>
            <person name="Yandell M.D."/>
            <person name="Zhang Q."/>
            <person name="Chen L.X."/>
            <person name="Brandon R.C."/>
            <person name="Rogers Y.-H.C."/>
            <person name="Blazej R.G."/>
            <person name="Champe M."/>
            <person name="Pfeiffer B.D."/>
            <person name="Wan K.H."/>
            <person name="Doyle C."/>
            <person name="Baxter E.G."/>
            <person name="Helt G."/>
            <person name="Nelson C.R."/>
            <person name="Miklos G.L.G."/>
            <person name="Abril J.F."/>
            <person name="Agbayani A."/>
            <person name="An H.-J."/>
            <person name="Andrews-Pfannkoch C."/>
            <person name="Baldwin D."/>
            <person name="Ballew R.M."/>
            <person name="Basu A."/>
            <person name="Baxendale J."/>
            <person name="Bayraktaroglu L."/>
            <person name="Beasley E.M."/>
            <person name="Beeson K.Y."/>
            <person name="Benos P.V."/>
            <person name="Berman B.P."/>
            <person name="Bhandari D."/>
            <person name="Bolshakov S."/>
            <person name="Borkova D."/>
            <person name="Botchan M.R."/>
            <person name="Bouck J."/>
            <person name="Brokstein P."/>
            <person name="Brottier P."/>
            <person name="Burtis K.C."/>
            <person name="Busam D.A."/>
            <person name="Butler H."/>
            <person name="Cadieu E."/>
            <person name="Center A."/>
            <person name="Chandra I."/>
            <person name="Cherry J.M."/>
            <person name="Cawley S."/>
            <person name="Dahlke C."/>
            <person name="Davenport L.B."/>
            <person name="Davies P."/>
            <person name="de Pablos B."/>
            <person name="Delcher A."/>
            <person name="Deng Z."/>
            <person name="Mays A.D."/>
            <person name="Dew I."/>
            <person name="Dietz S.M."/>
            <person name="Dodson K."/>
            <person name="Doup L.E."/>
            <person name="Downes M."/>
            <person name="Dugan-Rocha S."/>
            <person name="Dunkov B.C."/>
            <person name="Dunn P."/>
            <person name="Durbin K.J."/>
            <person name="Evangelista C.C."/>
            <person name="Ferraz C."/>
            <person name="Ferriera S."/>
            <person name="Fleischmann W."/>
            <person name="Fosler C."/>
            <person name="Gabrielian A.E."/>
            <person name="Garg N.S."/>
            <person name="Gelbart W.M."/>
            <person name="Glasser K."/>
            <person name="Glodek A."/>
            <person name="Gong F."/>
            <person name="Gorrell J.H."/>
            <person name="Gu Z."/>
            <person name="Guan P."/>
            <person name="Harris M."/>
            <person name="Harris N.L."/>
            <person name="Harvey D.A."/>
            <person name="Heiman T.J."/>
            <person name="Hernandez J.R."/>
            <person name="Houck J."/>
            <person name="Hostin D."/>
            <person name="Houston K.A."/>
            <person name="Howland T.J."/>
            <person name="Wei M.-H."/>
            <person name="Ibegwam C."/>
            <person name="Jalali M."/>
            <person name="Kalush F."/>
            <person name="Karpen G.H."/>
            <person name="Ke Z."/>
            <person name="Kennison J.A."/>
            <person name="Ketchum K.A."/>
            <person name="Kimmel B.E."/>
            <person name="Kodira C.D."/>
            <person name="Kraft C.L."/>
            <person name="Kravitz S."/>
            <person name="Kulp D."/>
            <person name="Lai Z."/>
            <person name="Lasko P."/>
            <person name="Lei Y."/>
            <person name="Levitsky A.A."/>
            <person name="Li J.H."/>
            <person name="Li Z."/>
            <person name="Liang Y."/>
            <person name="Lin X."/>
            <person name="Liu X."/>
            <person name="Mattei B."/>
            <person name="McIntosh T.C."/>
            <person name="McLeod M.P."/>
            <person name="McPherson D."/>
            <person name="Merkulov G."/>
            <person name="Milshina N.V."/>
            <person name="Mobarry C."/>
            <person name="Morris J."/>
            <person name="Moshrefi A."/>
            <person name="Mount S.M."/>
            <person name="Moy M."/>
            <person name="Murphy B."/>
            <person name="Murphy L."/>
            <person name="Muzny D.M."/>
            <person name="Nelson D.L."/>
            <person name="Nelson D.R."/>
            <person name="Nelson K.A."/>
            <person name="Nixon K."/>
            <person name="Nusskern D.R."/>
            <person name="Pacleb J.M."/>
            <person name="Palazzolo M."/>
            <person name="Pittman G.S."/>
            <person name="Pan S."/>
            <person name="Pollard J."/>
            <person name="Puri V."/>
            <person name="Reese M.G."/>
            <person name="Reinert K."/>
            <person name="Remington K."/>
            <person name="Saunders R.D.C."/>
            <person name="Scheeler F."/>
            <person name="Shen H."/>
            <person name="Shue B.C."/>
            <person name="Siden-Kiamos I."/>
            <person name="Simpson M."/>
            <person name="Skupski M.P."/>
            <person name="Smith T.J."/>
            <person name="Spier E."/>
            <person name="Spradling A.C."/>
            <person name="Stapleton M."/>
            <person name="Strong R."/>
            <person name="Sun E."/>
            <person name="Svirskas R."/>
            <person name="Tector C."/>
            <person name="Turner R."/>
            <person name="Venter E."/>
            <person name="Wang A.H."/>
            <person name="Wang X."/>
            <person name="Wang Z.-Y."/>
            <person name="Wassarman D.A."/>
            <person name="Weinstock G.M."/>
            <person name="Weissenbach J."/>
            <person name="Williams S.M."/>
            <person name="Woodage T."/>
            <person name="Worley K.C."/>
            <person name="Wu D."/>
            <person name="Yang S."/>
            <person name="Yao Q.A."/>
            <person name="Ye J."/>
            <person name="Yeh R.-F."/>
            <person name="Zaveri J.S."/>
            <person name="Zhan M."/>
            <person name="Zhang G."/>
            <person name="Zhao Q."/>
            <person name="Zheng L."/>
            <person name="Zheng X.H."/>
            <person name="Zhong F.N."/>
            <person name="Zhong W."/>
            <person name="Zhou X."/>
            <person name="Zhu S.C."/>
            <person name="Zhu X."/>
            <person name="Smith H.O."/>
            <person name="Gibbs R.A."/>
            <person name="Myers E.W."/>
            <person name="Rubin G.M."/>
            <person name="Venter J.C."/>
        </authorList>
    </citation>
    <scope>NUCLEOTIDE SEQUENCE [LARGE SCALE GENOMIC DNA]</scope>
    <source>
        <strain>Berkeley</strain>
    </source>
</reference>
<reference key="2">
    <citation type="journal article" date="2002" name="Genome Biol.">
        <title>Annotation of the Drosophila melanogaster euchromatic genome: a systematic review.</title>
        <authorList>
            <person name="Misra S."/>
            <person name="Crosby M.A."/>
            <person name="Mungall C.J."/>
            <person name="Matthews B.B."/>
            <person name="Campbell K.S."/>
            <person name="Hradecky P."/>
            <person name="Huang Y."/>
            <person name="Kaminker J.S."/>
            <person name="Millburn G.H."/>
            <person name="Prochnik S.E."/>
            <person name="Smith C.D."/>
            <person name="Tupy J.L."/>
            <person name="Whitfield E.J."/>
            <person name="Bayraktaroglu L."/>
            <person name="Berman B.P."/>
            <person name="Bettencourt B.R."/>
            <person name="Celniker S.E."/>
            <person name="de Grey A.D.N.J."/>
            <person name="Drysdale R.A."/>
            <person name="Harris N.L."/>
            <person name="Richter J."/>
            <person name="Russo S."/>
            <person name="Schroeder A.J."/>
            <person name="Shu S.Q."/>
            <person name="Stapleton M."/>
            <person name="Yamada C."/>
            <person name="Ashburner M."/>
            <person name="Gelbart W.M."/>
            <person name="Rubin G.M."/>
            <person name="Lewis S.E."/>
        </authorList>
    </citation>
    <scope>GENOME REANNOTATION</scope>
    <source>
        <strain>Berkeley</strain>
    </source>
</reference>
<reference key="3">
    <citation type="journal article" date="2002" name="Genome Biol.">
        <title>A Drosophila full-length cDNA resource.</title>
        <authorList>
            <person name="Stapleton M."/>
            <person name="Carlson J.W."/>
            <person name="Brokstein P."/>
            <person name="Yu C."/>
            <person name="Champe M."/>
            <person name="George R.A."/>
            <person name="Guarin H."/>
            <person name="Kronmiller B."/>
            <person name="Pacleb J.M."/>
            <person name="Park S."/>
            <person name="Wan K.H."/>
            <person name="Rubin G.M."/>
            <person name="Celniker S.E."/>
        </authorList>
    </citation>
    <scope>NUCLEOTIDE SEQUENCE [LARGE SCALE MRNA]</scope>
    <source>
        <strain>Berkeley</strain>
    </source>
</reference>
<reference key="4">
    <citation type="submission" date="2003-02" db="EMBL/GenBank/DDBJ databases">
        <authorList>
            <person name="Stapleton M."/>
            <person name="Brokstein P."/>
            <person name="Hong L."/>
            <person name="Agbayani A."/>
            <person name="Carlson J.W."/>
            <person name="Champe M."/>
            <person name="Chavez C."/>
            <person name="Dorsett V."/>
            <person name="Dresnek D."/>
            <person name="Farfan D."/>
            <person name="Frise E."/>
            <person name="George R.A."/>
            <person name="Gonzalez M."/>
            <person name="Guarin H."/>
            <person name="Kronmiller B."/>
            <person name="Li P.W."/>
            <person name="Liao G."/>
            <person name="Miranda A."/>
            <person name="Mungall C.J."/>
            <person name="Nunoo J."/>
            <person name="Pacleb J.M."/>
            <person name="Paragas V."/>
            <person name="Park S."/>
            <person name="Patel S."/>
            <person name="Phouanenavong S."/>
            <person name="Wan K.H."/>
            <person name="Yu C."/>
            <person name="Lewis S.E."/>
            <person name="Rubin G.M."/>
            <person name="Celniker S.E."/>
        </authorList>
    </citation>
    <scope>NUCLEOTIDE SEQUENCE [LARGE SCALE MRNA]</scope>
    <source>
        <strain>Berkeley</strain>
        <tissue>Testis</tissue>
    </source>
</reference>
<organism evidence="7">
    <name type="scientific">Drosophila melanogaster</name>
    <name type="common">Fruit fly</name>
    <dbReference type="NCBI Taxonomy" id="7227"/>
    <lineage>
        <taxon>Eukaryota</taxon>
        <taxon>Metazoa</taxon>
        <taxon>Ecdysozoa</taxon>
        <taxon>Arthropoda</taxon>
        <taxon>Hexapoda</taxon>
        <taxon>Insecta</taxon>
        <taxon>Pterygota</taxon>
        <taxon>Neoptera</taxon>
        <taxon>Endopterygota</taxon>
        <taxon>Diptera</taxon>
        <taxon>Brachycera</taxon>
        <taxon>Muscomorpha</taxon>
        <taxon>Ephydroidea</taxon>
        <taxon>Drosophilidae</taxon>
        <taxon>Drosophila</taxon>
        <taxon>Sophophora</taxon>
    </lineage>
</organism>